<name>CHST8_MOUSE</name>
<feature type="chain" id="PRO_0000189654" description="Carbohydrate sulfotransferase 8">
    <location>
        <begin position="1"/>
        <end position="417"/>
    </location>
</feature>
<feature type="topological domain" description="Cytoplasmic" evidence="2">
    <location>
        <begin position="1"/>
        <end position="10"/>
    </location>
</feature>
<feature type="transmembrane region" description="Helical; Signal-anchor for type II membrane protein" evidence="2">
    <location>
        <begin position="11"/>
        <end position="31"/>
    </location>
</feature>
<feature type="topological domain" description="Lumenal" evidence="2">
    <location>
        <begin position="32"/>
        <end position="417"/>
    </location>
</feature>
<feature type="region of interest" description="Disordered" evidence="3">
    <location>
        <begin position="47"/>
        <end position="101"/>
    </location>
</feature>
<feature type="compositionally biased region" description="Basic and acidic residues" evidence="3">
    <location>
        <begin position="56"/>
        <end position="69"/>
    </location>
</feature>
<feature type="binding site" evidence="1">
    <location>
        <begin position="191"/>
        <end position="197"/>
    </location>
    <ligand>
        <name>3'-phosphoadenylyl sulfate</name>
        <dbReference type="ChEBI" id="CHEBI:58339"/>
    </ligand>
</feature>
<feature type="binding site" evidence="1">
    <location>
        <begin position="251"/>
        <end position="259"/>
    </location>
    <ligand>
        <name>3'-phosphoadenylyl sulfate</name>
        <dbReference type="ChEBI" id="CHEBI:58339"/>
    </ligand>
</feature>
<feature type="glycosylation site" description="N-linked (GlcNAc...) asparagine" evidence="2">
    <location>
        <position position="121"/>
    </location>
</feature>
<feature type="glycosylation site" description="N-linked (GlcNAc...) asparagine" evidence="2">
    <location>
        <position position="122"/>
    </location>
</feature>
<feature type="glycosylation site" description="N-linked (GlcNAc...) asparagine" evidence="2">
    <location>
        <position position="287"/>
    </location>
</feature>
<feature type="glycosylation site" description="N-linked (GlcNAc...) asparagine" evidence="2">
    <location>
        <position position="360"/>
    </location>
</feature>
<feature type="glycosylation site" description="N-linked (GlcNAc...) asparagine" evidence="2">
    <location>
        <position position="408"/>
    </location>
</feature>
<feature type="sequence conflict" description="In Ref. 2 and 4." evidence="5" ref="2 4">
    <original>R</original>
    <variation>Q</variation>
    <location>
        <position position="4"/>
    </location>
</feature>
<feature type="sequence conflict" description="In Ref. 1; BAC87753." evidence="5" ref="1">
    <original>A</original>
    <variation>S</variation>
    <location>
        <position position="114"/>
    </location>
</feature>
<feature type="sequence conflict" description="In Ref. 1; BAC87753." evidence="5" ref="1">
    <original>P</original>
    <variation>L</variation>
    <location>
        <position position="364"/>
    </location>
</feature>
<feature type="sequence conflict" description="In Ref. 1; BAC87753." evidence="5" ref="1">
    <original>H</original>
    <variation>Y</variation>
    <location>
        <position position="382"/>
    </location>
</feature>
<protein>
    <recommendedName>
        <fullName>Carbohydrate sulfotransferase 8</fullName>
        <ecNumber>2.8.2.-</ecNumber>
    </recommendedName>
    <alternativeName>
        <fullName>GalNAc-4-O-sulfotransferase 1</fullName>
        <shortName>GalNAc-4-ST1</shortName>
        <shortName>GalNAc4ST-1</shortName>
    </alternativeName>
    <alternativeName>
        <fullName>N-acetylgalactosamine-4-O-sulfotransferase 1</fullName>
    </alternativeName>
</protein>
<proteinExistence type="evidence at transcript level"/>
<comment type="function">
    <text>Catalyzes the transfer of sulfate to position 4 of non-reducing N-acetylgalactosamine (GalNAc) residues in both N-glycans and O-glycans. Required for biosynthesis of glycoprotein hormones lutropin and thyrotropin, by mediating sulfation of their carbohydrate structures. Only active against terminal GalNAcbeta1,GalNAcbeta. Not active toward chondroitin.</text>
</comment>
<comment type="subcellular location">
    <subcellularLocation>
        <location evidence="1">Golgi apparatus membrane</location>
        <topology evidence="1">Single-pass type II membrane protein</topology>
    </subcellularLocation>
</comment>
<comment type="tissue specificity">
    <text evidence="4">Strongly expressed in brain. Weakly expressed in lung and kidney. Weakly expressed in pituitary.</text>
</comment>
<comment type="similarity">
    <text evidence="5">Belongs to the sulfotransferase 2 family.</text>
</comment>
<dbReference type="EC" id="2.8.2.-"/>
<dbReference type="EMBL" id="AB106878">
    <property type="protein sequence ID" value="BAC87753.1"/>
    <property type="molecule type" value="mRNA"/>
</dbReference>
<dbReference type="EMBL" id="AF308145">
    <property type="protein sequence ID" value="AAQ14542.1"/>
    <property type="molecule type" value="mRNA"/>
</dbReference>
<dbReference type="EMBL" id="AK051290">
    <property type="protein sequence ID" value="BAC34595.1"/>
    <property type="molecule type" value="mRNA"/>
</dbReference>
<dbReference type="EMBL" id="BC051124">
    <property type="protein sequence ID" value="AAH51124.1"/>
    <property type="molecule type" value="mRNA"/>
</dbReference>
<dbReference type="CCDS" id="CCDS21142.1"/>
<dbReference type="RefSeq" id="NP_780349.3">
    <property type="nucleotide sequence ID" value="NM_175140.4"/>
</dbReference>
<dbReference type="RefSeq" id="XP_006540400.1">
    <property type="nucleotide sequence ID" value="XM_006540337.5"/>
</dbReference>
<dbReference type="RefSeq" id="XP_006540402.1">
    <property type="nucleotide sequence ID" value="XM_006540339.2"/>
</dbReference>
<dbReference type="RefSeq" id="XP_006540403.1">
    <property type="nucleotide sequence ID" value="XM_006540340.4"/>
</dbReference>
<dbReference type="RefSeq" id="XP_006540404.1">
    <property type="nucleotide sequence ID" value="XM_006540341.1"/>
</dbReference>
<dbReference type="FunCoup" id="Q8BQ86">
    <property type="interactions" value="64"/>
</dbReference>
<dbReference type="STRING" id="10090.ENSMUSP00000159050"/>
<dbReference type="GlyConnect" id="2179">
    <property type="glycosylation" value="2 N-Linked glycans (1 site)"/>
</dbReference>
<dbReference type="GlyCosmos" id="Q8BQ86">
    <property type="glycosylation" value="5 sites, 1 glycan"/>
</dbReference>
<dbReference type="GlyGen" id="Q8BQ86">
    <property type="glycosylation" value="6 sites, 5 N-linked glycans (4 sites)"/>
</dbReference>
<dbReference type="iPTMnet" id="Q8BQ86"/>
<dbReference type="PhosphoSitePlus" id="Q8BQ86"/>
<dbReference type="PaxDb" id="10090-ENSMUSP00000077752"/>
<dbReference type="Antibodypedia" id="2401">
    <property type="antibodies" value="137 antibodies from 27 providers"/>
</dbReference>
<dbReference type="DNASU" id="68947"/>
<dbReference type="Ensembl" id="ENSMUST00000078686.8">
    <property type="protein sequence ID" value="ENSMUSP00000077752.7"/>
    <property type="gene ID" value="ENSMUSG00000060402.9"/>
</dbReference>
<dbReference type="Ensembl" id="ENSMUST00000205259.2">
    <property type="protein sequence ID" value="ENSMUSP00000145646.2"/>
    <property type="gene ID" value="ENSMUSG00000060402.9"/>
</dbReference>
<dbReference type="Ensembl" id="ENSMUST00000238947.2">
    <property type="protein sequence ID" value="ENSMUSP00000159050.2"/>
    <property type="gene ID" value="ENSMUSG00000060402.9"/>
</dbReference>
<dbReference type="GeneID" id="68947"/>
<dbReference type="KEGG" id="mmu:68947"/>
<dbReference type="UCSC" id="uc009gjh.2">
    <property type="organism name" value="mouse"/>
</dbReference>
<dbReference type="AGR" id="MGI:1916197"/>
<dbReference type="CTD" id="64377"/>
<dbReference type="MGI" id="MGI:1916197">
    <property type="gene designation" value="Chst8"/>
</dbReference>
<dbReference type="VEuPathDB" id="HostDB:ENSMUSG00000060402"/>
<dbReference type="eggNOG" id="KOG4651">
    <property type="taxonomic scope" value="Eukaryota"/>
</dbReference>
<dbReference type="GeneTree" id="ENSGT00940000159100"/>
<dbReference type="HOGENOM" id="CLU_043398_5_1_1"/>
<dbReference type="InParanoid" id="Q8BQ86"/>
<dbReference type="OMA" id="HIIAHDD"/>
<dbReference type="OrthoDB" id="2019940at2759"/>
<dbReference type="PhylomeDB" id="Q8BQ86"/>
<dbReference type="TreeFam" id="TF325581"/>
<dbReference type="Reactome" id="R-MMU-975578">
    <property type="pathway name" value="Reactions specific to the complex N-glycan synthesis pathway"/>
</dbReference>
<dbReference type="BioGRID-ORCS" id="68947">
    <property type="hits" value="3 hits in 78 CRISPR screens"/>
</dbReference>
<dbReference type="ChiTaRS" id="Chst8">
    <property type="organism name" value="mouse"/>
</dbReference>
<dbReference type="PRO" id="PR:Q8BQ86"/>
<dbReference type="Proteomes" id="UP000000589">
    <property type="component" value="Chromosome 7"/>
</dbReference>
<dbReference type="RNAct" id="Q8BQ86">
    <property type="molecule type" value="protein"/>
</dbReference>
<dbReference type="Bgee" id="ENSMUSG00000060402">
    <property type="expression patterns" value="Expressed in pelvic girdle bone/zone and 128 other cell types or tissues"/>
</dbReference>
<dbReference type="ExpressionAtlas" id="Q8BQ86">
    <property type="expression patterns" value="baseline and differential"/>
</dbReference>
<dbReference type="GO" id="GO:0000139">
    <property type="term" value="C:Golgi membrane"/>
    <property type="evidence" value="ECO:0007669"/>
    <property type="project" value="UniProtKB-SubCell"/>
</dbReference>
<dbReference type="GO" id="GO:0001537">
    <property type="term" value="F:dermatan 4-sulfotransferase activity"/>
    <property type="evidence" value="ECO:0000314"/>
    <property type="project" value="MGI"/>
</dbReference>
<dbReference type="GO" id="GO:0016051">
    <property type="term" value="P:carbohydrate biosynthetic process"/>
    <property type="evidence" value="ECO:0007669"/>
    <property type="project" value="InterPro"/>
</dbReference>
<dbReference type="GO" id="GO:0042446">
    <property type="term" value="P:hormone biosynthetic process"/>
    <property type="evidence" value="ECO:0000250"/>
    <property type="project" value="UniProtKB"/>
</dbReference>
<dbReference type="GO" id="GO:0016486">
    <property type="term" value="P:peptide hormone processing"/>
    <property type="evidence" value="ECO:0000304"/>
    <property type="project" value="MGI"/>
</dbReference>
<dbReference type="GO" id="GO:0030166">
    <property type="term" value="P:proteoglycan biosynthetic process"/>
    <property type="evidence" value="ECO:0000314"/>
    <property type="project" value="MGI"/>
</dbReference>
<dbReference type="GO" id="GO:0006790">
    <property type="term" value="P:sulfur compound metabolic process"/>
    <property type="evidence" value="ECO:0007669"/>
    <property type="project" value="Ensembl"/>
</dbReference>
<dbReference type="InterPro" id="IPR018011">
    <property type="entry name" value="Carb_sulfotrans_8-10"/>
</dbReference>
<dbReference type="InterPro" id="IPR005331">
    <property type="entry name" value="Sulfotransferase"/>
</dbReference>
<dbReference type="PANTHER" id="PTHR12137">
    <property type="entry name" value="CARBOHYDRATE SULFOTRANSFERASE"/>
    <property type="match status" value="1"/>
</dbReference>
<dbReference type="PANTHER" id="PTHR12137:SF7">
    <property type="entry name" value="CARBOHYDRATE SULFOTRANSFERASE 8"/>
    <property type="match status" value="1"/>
</dbReference>
<dbReference type="Pfam" id="PF03567">
    <property type="entry name" value="Sulfotransfer_2"/>
    <property type="match status" value="1"/>
</dbReference>
<gene>
    <name type="primary">Chst8</name>
</gene>
<accession>Q8BQ86</accession>
<accession>Q76EC6</accession>
<accession>Q80XD4</accession>
<evidence type="ECO:0000250" key="1"/>
<evidence type="ECO:0000255" key="2"/>
<evidence type="ECO:0000256" key="3">
    <source>
        <dbReference type="SAM" id="MobiDB-lite"/>
    </source>
</evidence>
<evidence type="ECO:0000269" key="4">
    <source>
    </source>
</evidence>
<evidence type="ECO:0000305" key="5"/>
<keyword id="KW-0119">Carbohydrate metabolism</keyword>
<keyword id="KW-0325">Glycoprotein</keyword>
<keyword id="KW-0333">Golgi apparatus</keyword>
<keyword id="KW-0472">Membrane</keyword>
<keyword id="KW-1185">Reference proteome</keyword>
<keyword id="KW-0735">Signal-anchor</keyword>
<keyword id="KW-0808">Transferase</keyword>
<keyword id="KW-0812">Transmembrane</keyword>
<keyword id="KW-1133">Transmembrane helix</keyword>
<organism>
    <name type="scientific">Mus musculus</name>
    <name type="common">Mouse</name>
    <dbReference type="NCBI Taxonomy" id="10090"/>
    <lineage>
        <taxon>Eukaryota</taxon>
        <taxon>Metazoa</taxon>
        <taxon>Chordata</taxon>
        <taxon>Craniata</taxon>
        <taxon>Vertebrata</taxon>
        <taxon>Euteleostomi</taxon>
        <taxon>Mammalia</taxon>
        <taxon>Eutheria</taxon>
        <taxon>Euarchontoglires</taxon>
        <taxon>Glires</taxon>
        <taxon>Rodentia</taxon>
        <taxon>Myomorpha</taxon>
        <taxon>Muroidea</taxon>
        <taxon>Muridae</taxon>
        <taxon>Murinae</taxon>
        <taxon>Mus</taxon>
        <taxon>Mus</taxon>
    </lineage>
</organism>
<reference key="1">
    <citation type="journal article" date="2003" name="J. Biochem.">
        <title>Mouse N-acetylgalactosamine 4-sulfotransferases-1 and -2. Molecular cloning, expression, chromosomal mapping and detection of their activity with GalNAcbeta1-4GlcNAcbeta1-octyl.</title>
        <authorList>
            <person name="Okuda T."/>
            <person name="Sawada T."/>
            <person name="Nakano H."/>
            <person name="Matsubara K."/>
            <person name="Matsuda Y."/>
            <person name="Fukuta M."/>
            <person name="Habuchi O."/>
        </authorList>
    </citation>
    <scope>NUCLEOTIDE SEQUENCE [MRNA]</scope>
    <scope>ENZYME ACTIVITY</scope>
    <scope>TISSUE SPECIFICITY</scope>
    <source>
        <tissue>Brain</tissue>
    </source>
</reference>
<reference key="2">
    <citation type="submission" date="2000-09" db="EMBL/GenBank/DDBJ databases">
        <title>Mouse N-acetylgalactosamine 4 sulfotransferase (GalNAc4ST).</title>
        <authorList>
            <person name="Hiraoka N."/>
            <person name="Fukuda M."/>
        </authorList>
    </citation>
    <scope>NUCLEOTIDE SEQUENCE [MRNA]</scope>
    <source>
        <strain>Swiss Webster / NIH</strain>
    </source>
</reference>
<reference key="3">
    <citation type="journal article" date="2005" name="Science">
        <title>The transcriptional landscape of the mammalian genome.</title>
        <authorList>
            <person name="Carninci P."/>
            <person name="Kasukawa T."/>
            <person name="Katayama S."/>
            <person name="Gough J."/>
            <person name="Frith M.C."/>
            <person name="Maeda N."/>
            <person name="Oyama R."/>
            <person name="Ravasi T."/>
            <person name="Lenhard B."/>
            <person name="Wells C."/>
            <person name="Kodzius R."/>
            <person name="Shimokawa K."/>
            <person name="Bajic V.B."/>
            <person name="Brenner S.E."/>
            <person name="Batalov S."/>
            <person name="Forrest A.R."/>
            <person name="Zavolan M."/>
            <person name="Davis M.J."/>
            <person name="Wilming L.G."/>
            <person name="Aidinis V."/>
            <person name="Allen J.E."/>
            <person name="Ambesi-Impiombato A."/>
            <person name="Apweiler R."/>
            <person name="Aturaliya R.N."/>
            <person name="Bailey T.L."/>
            <person name="Bansal M."/>
            <person name="Baxter L."/>
            <person name="Beisel K.W."/>
            <person name="Bersano T."/>
            <person name="Bono H."/>
            <person name="Chalk A.M."/>
            <person name="Chiu K.P."/>
            <person name="Choudhary V."/>
            <person name="Christoffels A."/>
            <person name="Clutterbuck D.R."/>
            <person name="Crowe M.L."/>
            <person name="Dalla E."/>
            <person name="Dalrymple B.P."/>
            <person name="de Bono B."/>
            <person name="Della Gatta G."/>
            <person name="di Bernardo D."/>
            <person name="Down T."/>
            <person name="Engstrom P."/>
            <person name="Fagiolini M."/>
            <person name="Faulkner G."/>
            <person name="Fletcher C.F."/>
            <person name="Fukushima T."/>
            <person name="Furuno M."/>
            <person name="Futaki S."/>
            <person name="Gariboldi M."/>
            <person name="Georgii-Hemming P."/>
            <person name="Gingeras T.R."/>
            <person name="Gojobori T."/>
            <person name="Green R.E."/>
            <person name="Gustincich S."/>
            <person name="Harbers M."/>
            <person name="Hayashi Y."/>
            <person name="Hensch T.K."/>
            <person name="Hirokawa N."/>
            <person name="Hill D."/>
            <person name="Huminiecki L."/>
            <person name="Iacono M."/>
            <person name="Ikeo K."/>
            <person name="Iwama A."/>
            <person name="Ishikawa T."/>
            <person name="Jakt M."/>
            <person name="Kanapin A."/>
            <person name="Katoh M."/>
            <person name="Kawasawa Y."/>
            <person name="Kelso J."/>
            <person name="Kitamura H."/>
            <person name="Kitano H."/>
            <person name="Kollias G."/>
            <person name="Krishnan S.P."/>
            <person name="Kruger A."/>
            <person name="Kummerfeld S.K."/>
            <person name="Kurochkin I.V."/>
            <person name="Lareau L.F."/>
            <person name="Lazarevic D."/>
            <person name="Lipovich L."/>
            <person name="Liu J."/>
            <person name="Liuni S."/>
            <person name="McWilliam S."/>
            <person name="Madan Babu M."/>
            <person name="Madera M."/>
            <person name="Marchionni L."/>
            <person name="Matsuda H."/>
            <person name="Matsuzawa S."/>
            <person name="Miki H."/>
            <person name="Mignone F."/>
            <person name="Miyake S."/>
            <person name="Morris K."/>
            <person name="Mottagui-Tabar S."/>
            <person name="Mulder N."/>
            <person name="Nakano N."/>
            <person name="Nakauchi H."/>
            <person name="Ng P."/>
            <person name="Nilsson R."/>
            <person name="Nishiguchi S."/>
            <person name="Nishikawa S."/>
            <person name="Nori F."/>
            <person name="Ohara O."/>
            <person name="Okazaki Y."/>
            <person name="Orlando V."/>
            <person name="Pang K.C."/>
            <person name="Pavan W.J."/>
            <person name="Pavesi G."/>
            <person name="Pesole G."/>
            <person name="Petrovsky N."/>
            <person name="Piazza S."/>
            <person name="Reed J."/>
            <person name="Reid J.F."/>
            <person name="Ring B.Z."/>
            <person name="Ringwald M."/>
            <person name="Rost B."/>
            <person name="Ruan Y."/>
            <person name="Salzberg S.L."/>
            <person name="Sandelin A."/>
            <person name="Schneider C."/>
            <person name="Schoenbach C."/>
            <person name="Sekiguchi K."/>
            <person name="Semple C.A."/>
            <person name="Seno S."/>
            <person name="Sessa L."/>
            <person name="Sheng Y."/>
            <person name="Shibata Y."/>
            <person name="Shimada H."/>
            <person name="Shimada K."/>
            <person name="Silva D."/>
            <person name="Sinclair B."/>
            <person name="Sperling S."/>
            <person name="Stupka E."/>
            <person name="Sugiura K."/>
            <person name="Sultana R."/>
            <person name="Takenaka Y."/>
            <person name="Taki K."/>
            <person name="Tammoja K."/>
            <person name="Tan S.L."/>
            <person name="Tang S."/>
            <person name="Taylor M.S."/>
            <person name="Tegner J."/>
            <person name="Teichmann S.A."/>
            <person name="Ueda H.R."/>
            <person name="van Nimwegen E."/>
            <person name="Verardo R."/>
            <person name="Wei C.L."/>
            <person name="Yagi K."/>
            <person name="Yamanishi H."/>
            <person name="Zabarovsky E."/>
            <person name="Zhu S."/>
            <person name="Zimmer A."/>
            <person name="Hide W."/>
            <person name="Bult C."/>
            <person name="Grimmond S.M."/>
            <person name="Teasdale R.D."/>
            <person name="Liu E.T."/>
            <person name="Brusic V."/>
            <person name="Quackenbush J."/>
            <person name="Wahlestedt C."/>
            <person name="Mattick J.S."/>
            <person name="Hume D.A."/>
            <person name="Kai C."/>
            <person name="Sasaki D."/>
            <person name="Tomaru Y."/>
            <person name="Fukuda S."/>
            <person name="Kanamori-Katayama M."/>
            <person name="Suzuki M."/>
            <person name="Aoki J."/>
            <person name="Arakawa T."/>
            <person name="Iida J."/>
            <person name="Imamura K."/>
            <person name="Itoh M."/>
            <person name="Kato T."/>
            <person name="Kawaji H."/>
            <person name="Kawagashira N."/>
            <person name="Kawashima T."/>
            <person name="Kojima M."/>
            <person name="Kondo S."/>
            <person name="Konno H."/>
            <person name="Nakano K."/>
            <person name="Ninomiya N."/>
            <person name="Nishio T."/>
            <person name="Okada M."/>
            <person name="Plessy C."/>
            <person name="Shibata K."/>
            <person name="Shiraki T."/>
            <person name="Suzuki S."/>
            <person name="Tagami M."/>
            <person name="Waki K."/>
            <person name="Watahiki A."/>
            <person name="Okamura-Oho Y."/>
            <person name="Suzuki H."/>
            <person name="Kawai J."/>
            <person name="Hayashizaki Y."/>
        </authorList>
    </citation>
    <scope>NUCLEOTIDE SEQUENCE [LARGE SCALE MRNA]</scope>
    <source>
        <strain>C57BL/6J</strain>
        <tissue>Spinal ganglion</tissue>
    </source>
</reference>
<reference key="4">
    <citation type="journal article" date="2004" name="Genome Res.">
        <title>The status, quality, and expansion of the NIH full-length cDNA project: the Mammalian Gene Collection (MGC).</title>
        <authorList>
            <consortium name="The MGC Project Team"/>
        </authorList>
    </citation>
    <scope>NUCLEOTIDE SEQUENCE [LARGE SCALE MRNA]</scope>
    <source>
        <strain>FVB/N</strain>
        <tissue>Colon</tissue>
    </source>
</reference>
<sequence length="417" mass="48282">MTPRLGTMRLACMFSSILLFGAAGLLLFISLQDPIELSPQQVPGIKFSIRPQQPQHDSHLRISTEKGTRDSPSGSPRGLQLQAPDQPRPHPKAAGSPLRLRQRRRRLLIKKMPAAGTNQGNNSSETFIQPRPRTMDSRWVSLHQTQQERKRVMREACAKYRASSSRRAVTPRHVSRIFVEDRHRVLYCEVPKAGCSNWKRVLMVLAGLASSTADIQHNTVHYGSALKRLDTFDRQGIVHRLSTYTKMLFVREPFERLVSAFRDKFEHPNSYYHPVFGKAILARYRANASREALRTGSGVQFPEFVQYLLDVHRPVGMDIHWDHVSRLCSPCLIDYDFVGKFESMEDDANFFLRLIHAPGNLTFPRFKDRHSEEARTTSRITHQYFAQLSSLQRQRTYDFYYMDYLMFNYSKPFSDLY</sequence>